<proteinExistence type="inferred from homology"/>
<comment type="function">
    <text evidence="1">Required for maturation of urease via the functional incorporation of the urease nickel metallocenter.</text>
</comment>
<comment type="subunit">
    <text evidence="1">UreD, UreF and UreG form a complex that acts as a GTP-hydrolysis-dependent molecular chaperone, activating the urease apoprotein by helping to assemble the nickel containing metallocenter of UreC. The UreE protein probably delivers the nickel.</text>
</comment>
<comment type="subcellular location">
    <subcellularLocation>
        <location evidence="1">Cytoplasm</location>
    </subcellularLocation>
</comment>
<comment type="similarity">
    <text evidence="1">Belongs to the UreF family.</text>
</comment>
<gene>
    <name evidence="1" type="primary">ureF</name>
    <name type="ordered locus">Bpro_1348</name>
</gene>
<reference key="1">
    <citation type="journal article" date="2008" name="Appl. Environ. Microbiol.">
        <title>The genome of Polaromonas sp. strain JS666: insights into the evolution of a hydrocarbon- and xenobiotic-degrading bacterium, and features of relevance to biotechnology.</title>
        <authorList>
            <person name="Mattes T.E."/>
            <person name="Alexander A.K."/>
            <person name="Richardson P.M."/>
            <person name="Munk A.C."/>
            <person name="Han C.S."/>
            <person name="Stothard P."/>
            <person name="Coleman N.V."/>
        </authorList>
    </citation>
    <scope>NUCLEOTIDE SEQUENCE [LARGE SCALE GENOMIC DNA]</scope>
    <source>
        <strain>JS666 / ATCC BAA-500</strain>
    </source>
</reference>
<name>UREF_POLSJ</name>
<organism>
    <name type="scientific">Polaromonas sp. (strain JS666 / ATCC BAA-500)</name>
    <dbReference type="NCBI Taxonomy" id="296591"/>
    <lineage>
        <taxon>Bacteria</taxon>
        <taxon>Pseudomonadati</taxon>
        <taxon>Pseudomonadota</taxon>
        <taxon>Betaproteobacteria</taxon>
        <taxon>Burkholderiales</taxon>
        <taxon>Comamonadaceae</taxon>
        <taxon>Polaromonas</taxon>
    </lineage>
</organism>
<keyword id="KW-0143">Chaperone</keyword>
<keyword id="KW-0963">Cytoplasm</keyword>
<keyword id="KW-0996">Nickel insertion</keyword>
<keyword id="KW-1185">Reference proteome</keyword>
<sequence length="233" mass="25179">MPASPAAQLPAASLLQLIWLASPALPVGGFSYSEGLETAVERAGVTTEVLAGDWLRDQLHLSLARGDLAVIAQAIPAWRVGDVQRIRELNDWVLQTRETSEMRAQAEQMGRSLLDWLRNHDGANAQHITACAQMQPTYPVAFALAASQTAAGVRDCLLAYAFGWAENAMQAALKSVPLGQSAGQRMLARLASDIPTAVEAAISLPDDERQAFSPMLAILSSQHETQYSRLFRS</sequence>
<feature type="chain" id="PRO_0000344143" description="Urease accessory protein UreF">
    <location>
        <begin position="1"/>
        <end position="233"/>
    </location>
</feature>
<dbReference type="EMBL" id="CP000316">
    <property type="protein sequence ID" value="ABE43297.1"/>
    <property type="molecule type" value="Genomic_DNA"/>
</dbReference>
<dbReference type="RefSeq" id="WP_011482296.1">
    <property type="nucleotide sequence ID" value="NC_007948.1"/>
</dbReference>
<dbReference type="SMR" id="Q12DU5"/>
<dbReference type="STRING" id="296591.Bpro_1348"/>
<dbReference type="KEGG" id="pol:Bpro_1348"/>
<dbReference type="eggNOG" id="COG0830">
    <property type="taxonomic scope" value="Bacteria"/>
</dbReference>
<dbReference type="HOGENOM" id="CLU_049215_2_1_4"/>
<dbReference type="OrthoDB" id="9798772at2"/>
<dbReference type="Proteomes" id="UP000001983">
    <property type="component" value="Chromosome"/>
</dbReference>
<dbReference type="GO" id="GO:0005737">
    <property type="term" value="C:cytoplasm"/>
    <property type="evidence" value="ECO:0007669"/>
    <property type="project" value="UniProtKB-SubCell"/>
</dbReference>
<dbReference type="GO" id="GO:0016151">
    <property type="term" value="F:nickel cation binding"/>
    <property type="evidence" value="ECO:0007669"/>
    <property type="project" value="UniProtKB-UniRule"/>
</dbReference>
<dbReference type="Gene3D" id="1.10.4190.10">
    <property type="entry name" value="Urease accessory protein UreF"/>
    <property type="match status" value="1"/>
</dbReference>
<dbReference type="HAMAP" id="MF_01385">
    <property type="entry name" value="UreF"/>
    <property type="match status" value="1"/>
</dbReference>
<dbReference type="InterPro" id="IPR002639">
    <property type="entry name" value="UreF"/>
</dbReference>
<dbReference type="InterPro" id="IPR038277">
    <property type="entry name" value="UreF_sf"/>
</dbReference>
<dbReference type="PANTHER" id="PTHR33620">
    <property type="entry name" value="UREASE ACCESSORY PROTEIN F"/>
    <property type="match status" value="1"/>
</dbReference>
<dbReference type="PANTHER" id="PTHR33620:SF1">
    <property type="entry name" value="UREASE ACCESSORY PROTEIN F"/>
    <property type="match status" value="1"/>
</dbReference>
<dbReference type="Pfam" id="PF01730">
    <property type="entry name" value="UreF"/>
    <property type="match status" value="1"/>
</dbReference>
<dbReference type="PIRSF" id="PIRSF009467">
    <property type="entry name" value="Ureas_acces_UreF"/>
    <property type="match status" value="1"/>
</dbReference>
<accession>Q12DU5</accession>
<protein>
    <recommendedName>
        <fullName evidence="1">Urease accessory protein UreF</fullName>
    </recommendedName>
</protein>
<evidence type="ECO:0000255" key="1">
    <source>
        <dbReference type="HAMAP-Rule" id="MF_01385"/>
    </source>
</evidence>